<reference key="1">
    <citation type="journal article" date="1999" name="Nature">
        <title>Sequence and analysis of chromosome 2 of the plant Arabidopsis thaliana.</title>
        <authorList>
            <person name="Lin X."/>
            <person name="Kaul S."/>
            <person name="Rounsley S.D."/>
            <person name="Shea T.P."/>
            <person name="Benito M.-I."/>
            <person name="Town C.D."/>
            <person name="Fujii C.Y."/>
            <person name="Mason T.M."/>
            <person name="Bowman C.L."/>
            <person name="Barnstead M.E."/>
            <person name="Feldblyum T.V."/>
            <person name="Buell C.R."/>
            <person name="Ketchum K.A."/>
            <person name="Lee J.J."/>
            <person name="Ronning C.M."/>
            <person name="Koo H.L."/>
            <person name="Moffat K.S."/>
            <person name="Cronin L.A."/>
            <person name="Shen M."/>
            <person name="Pai G."/>
            <person name="Van Aken S."/>
            <person name="Umayam L."/>
            <person name="Tallon L.J."/>
            <person name="Gill J.E."/>
            <person name="Adams M.D."/>
            <person name="Carrera A.J."/>
            <person name="Creasy T.H."/>
            <person name="Goodman H.M."/>
            <person name="Somerville C.R."/>
            <person name="Copenhaver G.P."/>
            <person name="Preuss D."/>
            <person name="Nierman W.C."/>
            <person name="White O."/>
            <person name="Eisen J.A."/>
            <person name="Salzberg S.L."/>
            <person name="Fraser C.M."/>
            <person name="Venter J.C."/>
        </authorList>
    </citation>
    <scope>NUCLEOTIDE SEQUENCE [LARGE SCALE GENOMIC DNA]</scope>
    <source>
        <strain>cv. Columbia</strain>
    </source>
</reference>
<reference key="2">
    <citation type="journal article" date="2017" name="Plant J.">
        <title>Araport11: a complete reannotation of the Arabidopsis thaliana reference genome.</title>
        <authorList>
            <person name="Cheng C.Y."/>
            <person name="Krishnakumar V."/>
            <person name="Chan A.P."/>
            <person name="Thibaud-Nissen F."/>
            <person name="Schobel S."/>
            <person name="Town C.D."/>
        </authorList>
    </citation>
    <scope>GENOME REANNOTATION</scope>
    <source>
        <strain>cv. Columbia</strain>
    </source>
</reference>
<reference key="3">
    <citation type="submission" date="2002-03" db="EMBL/GenBank/DDBJ databases">
        <title>Full-length cDNA from Arabidopsis thaliana.</title>
        <authorList>
            <person name="Brover V.V."/>
            <person name="Troukhan M.E."/>
            <person name="Alexandrov N.A."/>
            <person name="Lu Y.-P."/>
            <person name="Flavell R.B."/>
            <person name="Feldmann K.A."/>
        </authorList>
    </citation>
    <scope>NUCLEOTIDE SEQUENCE [LARGE SCALE MRNA]</scope>
</reference>
<reference key="4">
    <citation type="journal article" date="2002" name="Science">
        <title>Functional annotation of a full-length Arabidopsis cDNA collection.</title>
        <authorList>
            <person name="Seki M."/>
            <person name="Narusaka M."/>
            <person name="Kamiya A."/>
            <person name="Ishida J."/>
            <person name="Satou M."/>
            <person name="Sakurai T."/>
            <person name="Nakajima M."/>
            <person name="Enju A."/>
            <person name="Akiyama K."/>
            <person name="Oono Y."/>
            <person name="Muramatsu M."/>
            <person name="Hayashizaki Y."/>
            <person name="Kawai J."/>
            <person name="Carninci P."/>
            <person name="Itoh M."/>
            <person name="Ishii Y."/>
            <person name="Arakawa T."/>
            <person name="Shibata K."/>
            <person name="Shinagawa A."/>
            <person name="Shinozaki K."/>
        </authorList>
    </citation>
    <scope>NUCLEOTIDE SEQUENCE [LARGE SCALE MRNA]</scope>
    <source>
        <strain>cv. Columbia</strain>
    </source>
</reference>
<reference key="5">
    <citation type="submission" date="2005-03" db="EMBL/GenBank/DDBJ databases">
        <title>Large-scale analysis of RIKEN Arabidopsis full-length (RAFL) cDNAs.</title>
        <authorList>
            <person name="Totoki Y."/>
            <person name="Seki M."/>
            <person name="Ishida J."/>
            <person name="Nakajima M."/>
            <person name="Enju A."/>
            <person name="Kamiya A."/>
            <person name="Narusaka M."/>
            <person name="Shin-i T."/>
            <person name="Nakagawa M."/>
            <person name="Sakamoto N."/>
            <person name="Oishi K."/>
            <person name="Kohara Y."/>
            <person name="Kobayashi M."/>
            <person name="Toyoda A."/>
            <person name="Sakaki Y."/>
            <person name="Sakurai T."/>
            <person name="Iida K."/>
            <person name="Akiyama K."/>
            <person name="Satou M."/>
            <person name="Toyoda T."/>
            <person name="Konagaya A."/>
            <person name="Carninci P."/>
            <person name="Kawai J."/>
            <person name="Hayashizaki Y."/>
            <person name="Shinozaki K."/>
        </authorList>
    </citation>
    <scope>NUCLEOTIDE SEQUENCE [LARGE SCALE MRNA]</scope>
    <source>
        <strain>cv. Columbia</strain>
    </source>
</reference>
<accession>Q8GXP4</accession>
<accession>O04194</accession>
<comment type="caution">
    <text evidence="1">It is uncertain whether Met-1 or Met-13 is the initiator.</text>
</comment>
<comment type="sequence caution" evidence="1">
    <conflict type="erroneous initiation">
        <sequence resource="EMBL-CDS" id="AAB95276"/>
    </conflict>
</comment>
<comment type="sequence caution" evidence="1">
    <conflict type="erroneous initiation">
        <sequence resource="EMBL-CDS" id="AAM62742"/>
    </conflict>
</comment>
<sequence>MNFTKENCQFRKMLSTSSDLHGRLLRLSEPIAEILRRTQYTPQESSKVSTKDILLSLLPNTSSSRLANEESIKSLALACALLASSRSSTHELLSWIPENLSVMGESTFWEISRDCFSDFSSNSNAEKLVELVEDSEKIEMLPIVLPELKDGIEKSSLGKGSDAEDVSAAMARTPVGYAILAAHQLRWFVTQVKKPNLVKFCNLVVPCALTALDHWSPEVKGQGMITFVHLAKNVSSGDLGLYGDVVLDACCQNIASDDEIWIHVVELSVLLVTKIHPNNPRSPWYEKIMNEMLGHLERQPRNKERRITWLRFVEPLLNSLGLFLLAHFRRIFPLFFQWMHSDDAETVLLVLERLETVVRLTWIRHSPVFPRLVDELVSLYKESSMRKDRDDIRPLILRILMLLRQCKGLRFESAWSQYQEDPNLSTVSQHIWTSSS</sequence>
<protein>
    <recommendedName>
        <fullName>Uncharacterized protein At2g39910</fullName>
    </recommendedName>
</protein>
<keyword id="KW-1185">Reference proteome</keyword>
<proteinExistence type="evidence at transcript level"/>
<evidence type="ECO:0000305" key="1"/>
<gene>
    <name type="ordered locus">At2g39910</name>
    <name type="ORF">T28M21.7</name>
</gene>
<organism>
    <name type="scientific">Arabidopsis thaliana</name>
    <name type="common">Mouse-ear cress</name>
    <dbReference type="NCBI Taxonomy" id="3702"/>
    <lineage>
        <taxon>Eukaryota</taxon>
        <taxon>Viridiplantae</taxon>
        <taxon>Streptophyta</taxon>
        <taxon>Embryophyta</taxon>
        <taxon>Tracheophyta</taxon>
        <taxon>Spermatophyta</taxon>
        <taxon>Magnoliopsida</taxon>
        <taxon>eudicotyledons</taxon>
        <taxon>Gunneridae</taxon>
        <taxon>Pentapetalae</taxon>
        <taxon>rosids</taxon>
        <taxon>malvids</taxon>
        <taxon>Brassicales</taxon>
        <taxon>Brassicaceae</taxon>
        <taxon>Camelineae</taxon>
        <taxon>Arabidopsis</taxon>
    </lineage>
</organism>
<feature type="chain" id="PRO_0000271283" description="Uncharacterized protein At2g39910">
    <location>
        <begin position="1"/>
        <end position="436"/>
    </location>
</feature>
<feature type="sequence conflict" description="In Ref. 4; BAC42748 and 5; BAD95199." evidence="1" ref="4 5">
    <original>D</original>
    <variation>G</variation>
    <location>
        <position position="238"/>
    </location>
</feature>
<dbReference type="EMBL" id="AF002109">
    <property type="protein sequence ID" value="AAB95276.2"/>
    <property type="status" value="ALT_INIT"/>
    <property type="molecule type" value="Genomic_DNA"/>
</dbReference>
<dbReference type="EMBL" id="CP002685">
    <property type="protein sequence ID" value="AEC09748.1"/>
    <property type="molecule type" value="Genomic_DNA"/>
</dbReference>
<dbReference type="EMBL" id="AY085518">
    <property type="protein sequence ID" value="AAM62742.1"/>
    <property type="status" value="ALT_INIT"/>
    <property type="molecule type" value="mRNA"/>
</dbReference>
<dbReference type="EMBL" id="AK118122">
    <property type="protein sequence ID" value="BAC42748.1"/>
    <property type="molecule type" value="mRNA"/>
</dbReference>
<dbReference type="EMBL" id="AK222143">
    <property type="protein sequence ID" value="BAD95199.1"/>
    <property type="molecule type" value="mRNA"/>
</dbReference>
<dbReference type="PIR" id="H84822">
    <property type="entry name" value="H84822"/>
</dbReference>
<dbReference type="RefSeq" id="NP_565917.2">
    <property type="nucleotide sequence ID" value="NM_129549.4"/>
</dbReference>
<dbReference type="SMR" id="Q8GXP4"/>
<dbReference type="BioGRID" id="3916">
    <property type="interactions" value="1"/>
</dbReference>
<dbReference type="FunCoup" id="Q8GXP4">
    <property type="interactions" value="839"/>
</dbReference>
<dbReference type="IntAct" id="Q8GXP4">
    <property type="interactions" value="2"/>
</dbReference>
<dbReference type="STRING" id="3702.Q8GXP4"/>
<dbReference type="PaxDb" id="3702-AT2G39910.1"/>
<dbReference type="ProteomicsDB" id="234597"/>
<dbReference type="EnsemblPlants" id="AT2G39910.1">
    <property type="protein sequence ID" value="AT2G39910.1"/>
    <property type="gene ID" value="AT2G39910"/>
</dbReference>
<dbReference type="GeneID" id="818578"/>
<dbReference type="Gramene" id="AT2G39910.1">
    <property type="protein sequence ID" value="AT2G39910.1"/>
    <property type="gene ID" value="AT2G39910"/>
</dbReference>
<dbReference type="KEGG" id="ath:AT2G39910"/>
<dbReference type="Araport" id="AT2G39910"/>
<dbReference type="TAIR" id="AT2G39910"/>
<dbReference type="eggNOG" id="ENOG502QVNS">
    <property type="taxonomic scope" value="Eukaryota"/>
</dbReference>
<dbReference type="HOGENOM" id="CLU_055195_0_0_1"/>
<dbReference type="InParanoid" id="Q8GXP4"/>
<dbReference type="OMA" id="CFNELCT"/>
<dbReference type="PhylomeDB" id="Q8GXP4"/>
<dbReference type="PRO" id="PR:Q8GXP4"/>
<dbReference type="Proteomes" id="UP000006548">
    <property type="component" value="Chromosome 2"/>
</dbReference>
<dbReference type="ExpressionAtlas" id="Q8GXP4">
    <property type="expression patterns" value="baseline and differential"/>
</dbReference>
<dbReference type="Gene3D" id="1.25.10.10">
    <property type="entry name" value="Leucine-rich Repeat Variant"/>
    <property type="match status" value="1"/>
</dbReference>
<dbReference type="InterPro" id="IPR011989">
    <property type="entry name" value="ARM-like"/>
</dbReference>
<dbReference type="InterPro" id="IPR016024">
    <property type="entry name" value="ARM-type_fold"/>
</dbReference>
<dbReference type="PANTHER" id="PTHR14873">
    <property type="entry name" value="OS06G0694100 PROTEIN"/>
    <property type="match status" value="1"/>
</dbReference>
<dbReference type="PANTHER" id="PTHR14873:SF1">
    <property type="entry name" value="OS06G0694100 PROTEIN"/>
    <property type="match status" value="1"/>
</dbReference>
<dbReference type="SUPFAM" id="SSF48371">
    <property type="entry name" value="ARM repeat"/>
    <property type="match status" value="1"/>
</dbReference>
<name>Y2991_ARATH</name>